<feature type="initiator methionine" description="Removed" evidence="1">
    <location>
        <position position="1"/>
    </location>
</feature>
<feature type="chain" id="PRO_0000061982" description="Photosystem I iron-sulfur center">
    <location>
        <begin position="2"/>
        <end position="81"/>
    </location>
</feature>
<feature type="domain" description="4Fe-4S ferredoxin-type 1" evidence="2">
    <location>
        <begin position="2"/>
        <end position="31"/>
    </location>
</feature>
<feature type="domain" description="4Fe-4S ferredoxin-type 2" evidence="2">
    <location>
        <begin position="39"/>
        <end position="68"/>
    </location>
</feature>
<feature type="binding site" evidence="2">
    <location>
        <position position="11"/>
    </location>
    <ligand>
        <name>[4Fe-4S] cluster</name>
        <dbReference type="ChEBI" id="CHEBI:49883"/>
        <label>1</label>
    </ligand>
</feature>
<feature type="binding site" evidence="2">
    <location>
        <position position="14"/>
    </location>
    <ligand>
        <name>[4Fe-4S] cluster</name>
        <dbReference type="ChEBI" id="CHEBI:49883"/>
        <label>1</label>
    </ligand>
</feature>
<feature type="binding site" evidence="2">
    <location>
        <position position="17"/>
    </location>
    <ligand>
        <name>[4Fe-4S] cluster</name>
        <dbReference type="ChEBI" id="CHEBI:49883"/>
        <label>1</label>
    </ligand>
</feature>
<feature type="binding site" evidence="2">
    <location>
        <position position="21"/>
    </location>
    <ligand>
        <name>[4Fe-4S] cluster</name>
        <dbReference type="ChEBI" id="CHEBI:49883"/>
        <label>2</label>
    </ligand>
</feature>
<feature type="binding site" evidence="2">
    <location>
        <position position="48"/>
    </location>
    <ligand>
        <name>[4Fe-4S] cluster</name>
        <dbReference type="ChEBI" id="CHEBI:49883"/>
        <label>2</label>
    </ligand>
</feature>
<feature type="binding site" evidence="2">
    <location>
        <position position="51"/>
    </location>
    <ligand>
        <name>[4Fe-4S] cluster</name>
        <dbReference type="ChEBI" id="CHEBI:49883"/>
        <label>2</label>
    </ligand>
</feature>
<feature type="binding site" evidence="2">
    <location>
        <position position="54"/>
    </location>
    <ligand>
        <name>[4Fe-4S] cluster</name>
        <dbReference type="ChEBI" id="CHEBI:49883"/>
        <label>2</label>
    </ligand>
</feature>
<feature type="binding site" evidence="2">
    <location>
        <position position="58"/>
    </location>
    <ligand>
        <name>[4Fe-4S] cluster</name>
        <dbReference type="ChEBI" id="CHEBI:49883"/>
        <label>1</label>
    </ligand>
</feature>
<accession>Q6B8M0</accession>
<proteinExistence type="inferred from homology"/>
<comment type="function">
    <text>Apoprotein for the two 4Fe-4S centers FA and FB of photosystem I (PSI); essential for photochemical activity. FB is the terminal electron acceptor of PSI, donating electrons to ferredoxin. The C-terminus interacts with PsaA/B/D and helps assemble the protein into the PSI complex. Required for binding of PsaD and PsaE to PSI. PSI is a plastocyanin/cytochrome c6-ferredoxin oxidoreductase, converting photonic excitation into a charge separation, which transfers an electron from the donor P700 chlorophyll pair to the spectroscopically characterized acceptors A0, A1, FX, FA and FB in turn.</text>
</comment>
<comment type="catalytic activity">
    <reaction evidence="2">
        <text>reduced [plastocyanin] + hnu + oxidized [2Fe-2S]-[ferredoxin] = oxidized [plastocyanin] + reduced [2Fe-2S]-[ferredoxin]</text>
        <dbReference type="Rhea" id="RHEA:30407"/>
        <dbReference type="Rhea" id="RHEA-COMP:10000"/>
        <dbReference type="Rhea" id="RHEA-COMP:10001"/>
        <dbReference type="Rhea" id="RHEA-COMP:10039"/>
        <dbReference type="Rhea" id="RHEA-COMP:10040"/>
        <dbReference type="ChEBI" id="CHEBI:29036"/>
        <dbReference type="ChEBI" id="CHEBI:30212"/>
        <dbReference type="ChEBI" id="CHEBI:33737"/>
        <dbReference type="ChEBI" id="CHEBI:33738"/>
        <dbReference type="ChEBI" id="CHEBI:49552"/>
        <dbReference type="EC" id="1.97.1.12"/>
    </reaction>
</comment>
<comment type="cofactor">
    <cofactor evidence="2">
        <name>[4Fe-4S] cluster</name>
        <dbReference type="ChEBI" id="CHEBI:49883"/>
    </cofactor>
    <text evidence="2">Binds 2 [4Fe-4S] clusters. Cluster 2 is most probably the spectroscopically characterized electron acceptor FA and cluster 1 is most probably FB.</text>
</comment>
<comment type="subunit">
    <text evidence="2">The eukaryotic PSI reaction center is composed of at least 11 subunits.</text>
</comment>
<comment type="subcellular location">
    <subcellularLocation>
        <location evidence="2">Plastid</location>
        <location evidence="2">Chloroplast thylakoid membrane</location>
        <topology evidence="2">Peripheral membrane protein</topology>
        <orientation evidence="2">Stromal side</orientation>
    </subcellularLocation>
</comment>
<gene>
    <name evidence="2" type="primary">psaC</name>
    <name type="ordered locus">Grc000184</name>
</gene>
<protein>
    <recommendedName>
        <fullName evidence="2">Photosystem I iron-sulfur center</fullName>
        <ecNumber evidence="2">1.97.1.12</ecNumber>
    </recommendedName>
    <alternativeName>
        <fullName evidence="2">9 kDa polypeptide</fullName>
    </alternativeName>
    <alternativeName>
        <fullName evidence="2">PSI-C</fullName>
    </alternativeName>
    <alternativeName>
        <fullName evidence="2">Photosystem I subunit VII</fullName>
    </alternativeName>
    <alternativeName>
        <fullName evidence="2">PsaC</fullName>
    </alternativeName>
</protein>
<geneLocation type="chloroplast"/>
<dbReference type="EC" id="1.97.1.12" evidence="2"/>
<dbReference type="EMBL" id="AY673996">
    <property type="protein sequence ID" value="AAT79765.1"/>
    <property type="molecule type" value="Genomic_DNA"/>
</dbReference>
<dbReference type="RefSeq" id="YP_063690.1">
    <property type="nucleotide sequence ID" value="NC_006137.1"/>
</dbReference>
<dbReference type="SMR" id="Q6B8M0"/>
<dbReference type="GeneID" id="2944125"/>
<dbReference type="GO" id="GO:0009535">
    <property type="term" value="C:chloroplast thylakoid membrane"/>
    <property type="evidence" value="ECO:0007669"/>
    <property type="project" value="UniProtKB-SubCell"/>
</dbReference>
<dbReference type="GO" id="GO:0009522">
    <property type="term" value="C:photosystem I"/>
    <property type="evidence" value="ECO:0007669"/>
    <property type="project" value="UniProtKB-KW"/>
</dbReference>
<dbReference type="GO" id="GO:0051539">
    <property type="term" value="F:4 iron, 4 sulfur cluster binding"/>
    <property type="evidence" value="ECO:0007669"/>
    <property type="project" value="UniProtKB-KW"/>
</dbReference>
<dbReference type="GO" id="GO:0009055">
    <property type="term" value="F:electron transfer activity"/>
    <property type="evidence" value="ECO:0007669"/>
    <property type="project" value="UniProtKB-UniRule"/>
</dbReference>
<dbReference type="GO" id="GO:0046872">
    <property type="term" value="F:metal ion binding"/>
    <property type="evidence" value="ECO:0007669"/>
    <property type="project" value="UniProtKB-KW"/>
</dbReference>
<dbReference type="GO" id="GO:0016491">
    <property type="term" value="F:oxidoreductase activity"/>
    <property type="evidence" value="ECO:0007669"/>
    <property type="project" value="UniProtKB-KW"/>
</dbReference>
<dbReference type="GO" id="GO:0009773">
    <property type="term" value="P:photosynthetic electron transport in photosystem I"/>
    <property type="evidence" value="ECO:0007669"/>
    <property type="project" value="InterPro"/>
</dbReference>
<dbReference type="FunFam" id="3.30.70.20:FF:000001">
    <property type="entry name" value="Photosystem I iron-sulfur center"/>
    <property type="match status" value="1"/>
</dbReference>
<dbReference type="Gene3D" id="3.30.70.20">
    <property type="match status" value="1"/>
</dbReference>
<dbReference type="HAMAP" id="MF_01303">
    <property type="entry name" value="PSI_PsaC"/>
    <property type="match status" value="1"/>
</dbReference>
<dbReference type="InterPro" id="IPR017896">
    <property type="entry name" value="4Fe4S_Fe-S-bd"/>
</dbReference>
<dbReference type="InterPro" id="IPR017900">
    <property type="entry name" value="4Fe4S_Fe_S_CS"/>
</dbReference>
<dbReference type="InterPro" id="IPR050157">
    <property type="entry name" value="PSI_iron-sulfur_center"/>
</dbReference>
<dbReference type="InterPro" id="IPR017491">
    <property type="entry name" value="PSI_PsaC"/>
</dbReference>
<dbReference type="NCBIfam" id="TIGR03048">
    <property type="entry name" value="PS_I_psaC"/>
    <property type="match status" value="1"/>
</dbReference>
<dbReference type="PANTHER" id="PTHR24960:SF79">
    <property type="entry name" value="PHOTOSYSTEM I IRON-SULFUR CENTER"/>
    <property type="match status" value="1"/>
</dbReference>
<dbReference type="PANTHER" id="PTHR24960">
    <property type="entry name" value="PHOTOSYSTEM I IRON-SULFUR CENTER-RELATED"/>
    <property type="match status" value="1"/>
</dbReference>
<dbReference type="Pfam" id="PF12838">
    <property type="entry name" value="Fer4_7"/>
    <property type="match status" value="1"/>
</dbReference>
<dbReference type="SUPFAM" id="SSF54862">
    <property type="entry name" value="4Fe-4S ferredoxins"/>
    <property type="match status" value="1"/>
</dbReference>
<dbReference type="PROSITE" id="PS00198">
    <property type="entry name" value="4FE4S_FER_1"/>
    <property type="match status" value="2"/>
</dbReference>
<dbReference type="PROSITE" id="PS51379">
    <property type="entry name" value="4FE4S_FER_2"/>
    <property type="match status" value="2"/>
</dbReference>
<evidence type="ECO:0000250" key="1"/>
<evidence type="ECO:0000255" key="2">
    <source>
        <dbReference type="HAMAP-Rule" id="MF_01303"/>
    </source>
</evidence>
<organism>
    <name type="scientific">Gracilaria tenuistipitata var. liui</name>
    <name type="common">Red alga</name>
    <dbReference type="NCBI Taxonomy" id="285951"/>
    <lineage>
        <taxon>Eukaryota</taxon>
        <taxon>Rhodophyta</taxon>
        <taxon>Florideophyceae</taxon>
        <taxon>Rhodymeniophycidae</taxon>
        <taxon>Gracilariales</taxon>
        <taxon>Gracilariaceae</taxon>
        <taxon>Gracilaria</taxon>
        <taxon>Gracilaria tenuistipitata</taxon>
    </lineage>
</organism>
<sequence length="81" mass="8758">MAHSVKVYDTCIGCTQCVRACPCDVLEMVPWDGCKAGQIASAPRTEDCIGCKRCETACPTDFLSVRVYLGAETTRSMGLAY</sequence>
<keyword id="KW-0004">4Fe-4S</keyword>
<keyword id="KW-0150">Chloroplast</keyword>
<keyword id="KW-0249">Electron transport</keyword>
<keyword id="KW-0408">Iron</keyword>
<keyword id="KW-0411">Iron-sulfur</keyword>
<keyword id="KW-0472">Membrane</keyword>
<keyword id="KW-0479">Metal-binding</keyword>
<keyword id="KW-0560">Oxidoreductase</keyword>
<keyword id="KW-0602">Photosynthesis</keyword>
<keyword id="KW-0603">Photosystem I</keyword>
<keyword id="KW-0934">Plastid</keyword>
<keyword id="KW-0677">Repeat</keyword>
<keyword id="KW-0793">Thylakoid</keyword>
<keyword id="KW-0813">Transport</keyword>
<name>PSAC_GRATL</name>
<reference key="1">
    <citation type="journal article" date="2004" name="J. Mol. Evol.">
        <title>Comparative analysis of the complete plastid genome sequence of the red alga Gracilaria tenuistipitata var. liui provides insights into the evolution of rhodoplasts and their relationship to other plastids.</title>
        <authorList>
            <person name="Hagopian J.C."/>
            <person name="Reis M."/>
            <person name="Kitajima J.P."/>
            <person name="Bhattacharya D."/>
            <person name="de Oliveira M.C."/>
        </authorList>
    </citation>
    <scope>NUCLEOTIDE SEQUENCE [LARGE SCALE GENOMIC DNA]</scope>
</reference>